<accession>O36381</accession>
<dbReference type="EMBL" id="AF005370">
    <property type="protein sequence ID" value="AAC58078.1"/>
    <property type="molecule type" value="Genomic_DNA"/>
</dbReference>
<dbReference type="PIR" id="T03126">
    <property type="entry name" value="T03126"/>
</dbReference>
<dbReference type="RefSeq" id="NP_065530.1">
    <property type="nucleotide sequence ID" value="NC_002531.1"/>
</dbReference>
<dbReference type="SMR" id="O36381"/>
<dbReference type="KEGG" id="vg:911795"/>
<dbReference type="Proteomes" id="UP000000941">
    <property type="component" value="Segment"/>
</dbReference>
<dbReference type="GO" id="GO:0042025">
    <property type="term" value="C:host cell nucleus"/>
    <property type="evidence" value="ECO:0007669"/>
    <property type="project" value="UniProtKB-SubCell"/>
</dbReference>
<dbReference type="GO" id="GO:0019028">
    <property type="term" value="C:viral capsid"/>
    <property type="evidence" value="ECO:0007669"/>
    <property type="project" value="UniProtKB-KW"/>
</dbReference>
<dbReference type="GO" id="GO:0051276">
    <property type="term" value="P:chromosome organization"/>
    <property type="evidence" value="ECO:0007669"/>
    <property type="project" value="InterPro"/>
</dbReference>
<dbReference type="HAMAP" id="MF_04017">
    <property type="entry name" value="HSV_CVC1"/>
    <property type="match status" value="1"/>
</dbReference>
<dbReference type="InterPro" id="IPR007640">
    <property type="entry name" value="UL17-like"/>
</dbReference>
<dbReference type="Pfam" id="PF04559">
    <property type="entry name" value="Herpes_UL17"/>
    <property type="match status" value="1"/>
</dbReference>
<keyword id="KW-0167">Capsid protein</keyword>
<keyword id="KW-1048">Host nucleus</keyword>
<keyword id="KW-0426">Late protein</keyword>
<keyword id="KW-1185">Reference proteome</keyword>
<keyword id="KW-0231">Viral genome packaging</keyword>
<keyword id="KW-1188">Viral release from host cell</keyword>
<keyword id="KW-0946">Virion</keyword>
<organism>
    <name type="scientific">Alcelaphine herpesvirus 1 (strain C500)</name>
    <name type="common">AlHV-1</name>
    <name type="synonym">Malignant catarrhal fever virus</name>
    <dbReference type="NCBI Taxonomy" id="654901"/>
    <lineage>
        <taxon>Viruses</taxon>
        <taxon>Duplodnaviria</taxon>
        <taxon>Heunggongvirae</taxon>
        <taxon>Peploviricota</taxon>
        <taxon>Herviviricetes</taxon>
        <taxon>Herpesvirales</taxon>
        <taxon>Orthoherpesviridae</taxon>
        <taxon>Gammaherpesvirinae</taxon>
        <taxon>Macavirus</taxon>
        <taxon>Macavirus alcelaphinegamma1</taxon>
    </lineage>
</organism>
<proteinExistence type="inferred from homology"/>
<name>CVC1_ALHV1</name>
<reference key="1">
    <citation type="journal article" date="1997" name="J. Virol.">
        <title>Primary structure of the alcelaphine herpesvirus 1 genome.</title>
        <authorList>
            <person name="Ensser A."/>
            <person name="Pflanz R."/>
            <person name="Fleckenstein B."/>
        </authorList>
    </citation>
    <scope>NUCLEOTIDE SEQUENCE [LARGE SCALE GENOMIC DNA]</scope>
</reference>
<sequence length="474" mass="52880">MDVHTNNWRYFHHGCDVMAHLVIPEDLIEGLYAEDRPKIFSCTLKVIDYQTNLVSEPVIVWARSIDHRHTVGTLTSGIALSIPLLLTNDTWHPFNIILLRFAETANHNACYVRFFYQTIFSGLIKAGAPPVEEVNHPPVELPPREDPLVNILQGRSGRQFPATEESTNDHTASQKLVIGEAASAYLNHRALERSPSLRGALAGEIFSSSGASNLSGSVPPANRQARRTALVNLVGTKDFTKDMLRLLPLTHCLSGKRFWLCMYNPEGYKNLVSCLNHLSEDELKKINPLSIIQQDTSFLTLKMNQFVDSLLEECRAANFRMQQVLGVAIRSDASNALEYVQEQFYEACFTLRCATNENSGWVKAAVATQSRKQGVWLDVISLWDQGVGSWGVSLKLPNPLPGLHTLACIQQLSCQLEGKHKYLLESVCAKDDQIAVLHSHTLNAWLLLPGGFAIKGKFTHSEKDLLHISSRYGV</sequence>
<evidence type="ECO:0000255" key="1">
    <source>
        <dbReference type="HAMAP-Rule" id="MF_04017"/>
    </source>
</evidence>
<protein>
    <recommendedName>
        <fullName evidence="1">Capsid vertex component 1</fullName>
    </recommendedName>
</protein>
<comment type="function">
    <text evidence="1">Capsid vertex-specific component that plays a role during viral DNA encapsidation, assuring correct genome cleavage and presumably stabilizing capsids that contain full-length viral genomes.</text>
</comment>
<comment type="subunit">
    <text evidence="1">Interacts (via C-terminus) with capsid vertex component 2/CVC2.</text>
</comment>
<comment type="subcellular location">
    <subcellularLocation>
        <location evidence="1">Virion</location>
    </subcellularLocation>
    <subcellularLocation>
        <location evidence="1">Host nucleus</location>
    </subcellularLocation>
</comment>
<comment type="similarity">
    <text evidence="1">Belongs to the herpesviridae CVC1 protein family.</text>
</comment>
<gene>
    <name evidence="1" type="primary">CVC1</name>
    <name type="ordered locus">32</name>
</gene>
<feature type="chain" id="PRO_0000405762" description="Capsid vertex component 1">
    <location>
        <begin position="1"/>
        <end position="474"/>
    </location>
</feature>
<organismHost>
    <name type="scientific">Connochaetes taurinus</name>
    <name type="common">Blue wildebeest</name>
    <dbReference type="NCBI Taxonomy" id="9927"/>
</organismHost>